<organism>
    <name type="scientific">Kluyveromyces lactis (strain ATCC 8585 / CBS 2359 / DSM 70799 / NBRC 1267 / NRRL Y-1140 / WM37)</name>
    <name type="common">Yeast</name>
    <name type="synonym">Candida sphaerica</name>
    <dbReference type="NCBI Taxonomy" id="284590"/>
    <lineage>
        <taxon>Eukaryota</taxon>
        <taxon>Fungi</taxon>
        <taxon>Dikarya</taxon>
        <taxon>Ascomycota</taxon>
        <taxon>Saccharomycotina</taxon>
        <taxon>Saccharomycetes</taxon>
        <taxon>Saccharomycetales</taxon>
        <taxon>Saccharomycetaceae</taxon>
        <taxon>Kluyveromyces</taxon>
    </lineage>
</organism>
<evidence type="ECO:0000250" key="1"/>
<evidence type="ECO:0000255" key="2"/>
<evidence type="ECO:0000305" key="3"/>
<sequence length="619" mass="70818">MLRIGSRCVRSVPKSSLRVSSTKIGKLFVRSVSDKPEEVFTKLSDENDPQRDAFFKYSWGTWLKNDKQEKEKRITKFSLEGLNSVIDDLYKQSIENAKRLSKSSIPPPAYLPNLTVSLPHNVKIENIGTVNPNEKIRIVSMASIHEGKHHRIYKIDTNAEKSFVLRIPYALDDENTLAYRLKSEVATMDFADLKLGLKVPKVYSFGVNALNPVRQPFILEEYIEGTLLMRSWTPLENDAEDGKSHKDKLNAVINPISKFQAKLAEVKFNAFGSLYFAKDYKTSEESAYEGETNEELKDRWRIGPSVERCLWRKKSTLNFDDRKQYLGPWDISSPLDIVKCTGLLEAENARARLGLVQAHASPEVVAEDILKDQIKTFDNLAKVAPDLINTKTTSIPKMENLLKPRLHHPDLDPMNVILKEDDDVPYLLDFEGSSIKPYILQNTPQFVAYDGPKIYDLEKDIEGYKDMEESEKAKLEFMYKRTRNQFLWEFALNENLPELISSVAPPIKVLRNPYVAAIERKSDEEYLLIEEALLQLAEVWPIFANNKLVNAAEYPLKYSEEEVKKHADALNAYHEKLISQPFAATQGWMPQDMFDNLVQGGILVKNEKGDYVISRTEDA</sequence>
<comment type="subcellular location">
    <subcellularLocation>
        <location evidence="1">Mitochondrion</location>
    </subcellularLocation>
</comment>
<comment type="similarity">
    <text evidence="3">Belongs to the AIM9 family.</text>
</comment>
<reference key="1">
    <citation type="journal article" date="2004" name="Nature">
        <title>Genome evolution in yeasts.</title>
        <authorList>
            <person name="Dujon B."/>
            <person name="Sherman D."/>
            <person name="Fischer G."/>
            <person name="Durrens P."/>
            <person name="Casaregola S."/>
            <person name="Lafontaine I."/>
            <person name="de Montigny J."/>
            <person name="Marck C."/>
            <person name="Neuveglise C."/>
            <person name="Talla E."/>
            <person name="Goffard N."/>
            <person name="Frangeul L."/>
            <person name="Aigle M."/>
            <person name="Anthouard V."/>
            <person name="Babour A."/>
            <person name="Barbe V."/>
            <person name="Barnay S."/>
            <person name="Blanchin S."/>
            <person name="Beckerich J.-M."/>
            <person name="Beyne E."/>
            <person name="Bleykasten C."/>
            <person name="Boisrame A."/>
            <person name="Boyer J."/>
            <person name="Cattolico L."/>
            <person name="Confanioleri F."/>
            <person name="de Daruvar A."/>
            <person name="Despons L."/>
            <person name="Fabre E."/>
            <person name="Fairhead C."/>
            <person name="Ferry-Dumazet H."/>
            <person name="Groppi A."/>
            <person name="Hantraye F."/>
            <person name="Hennequin C."/>
            <person name="Jauniaux N."/>
            <person name="Joyet P."/>
            <person name="Kachouri R."/>
            <person name="Kerrest A."/>
            <person name="Koszul R."/>
            <person name="Lemaire M."/>
            <person name="Lesur I."/>
            <person name="Ma L."/>
            <person name="Muller H."/>
            <person name="Nicaud J.-M."/>
            <person name="Nikolski M."/>
            <person name="Oztas S."/>
            <person name="Ozier-Kalogeropoulos O."/>
            <person name="Pellenz S."/>
            <person name="Potier S."/>
            <person name="Richard G.-F."/>
            <person name="Straub M.-L."/>
            <person name="Suleau A."/>
            <person name="Swennen D."/>
            <person name="Tekaia F."/>
            <person name="Wesolowski-Louvel M."/>
            <person name="Westhof E."/>
            <person name="Wirth B."/>
            <person name="Zeniou-Meyer M."/>
            <person name="Zivanovic Y."/>
            <person name="Bolotin-Fukuhara M."/>
            <person name="Thierry A."/>
            <person name="Bouchier C."/>
            <person name="Caudron B."/>
            <person name="Scarpelli C."/>
            <person name="Gaillardin C."/>
            <person name="Weissenbach J."/>
            <person name="Wincker P."/>
            <person name="Souciet J.-L."/>
        </authorList>
    </citation>
    <scope>NUCLEOTIDE SEQUENCE [LARGE SCALE GENOMIC DNA]</scope>
    <source>
        <strain>ATCC 8585 / CBS 2359 / DSM 70799 / NBRC 1267 / NRRL Y-1140 / WM37</strain>
    </source>
</reference>
<accession>Q6CU52</accession>
<dbReference type="EMBL" id="CR382123">
    <property type="protein sequence ID" value="CAH01388.1"/>
    <property type="molecule type" value="Genomic_DNA"/>
</dbReference>
<dbReference type="RefSeq" id="XP_452537.1">
    <property type="nucleotide sequence ID" value="XM_452537.1"/>
</dbReference>
<dbReference type="FunCoup" id="Q6CU52">
    <property type="interactions" value="26"/>
</dbReference>
<dbReference type="STRING" id="284590.Q6CU52"/>
<dbReference type="PaxDb" id="284590-Q6CU52"/>
<dbReference type="KEGG" id="kla:KLLA0_C07579g"/>
<dbReference type="eggNOG" id="ENOG502QV1E">
    <property type="taxonomic scope" value="Eukaryota"/>
</dbReference>
<dbReference type="HOGENOM" id="CLU_019189_0_1_1"/>
<dbReference type="InParanoid" id="Q6CU52"/>
<dbReference type="OMA" id="GWIPQDM"/>
<dbReference type="Proteomes" id="UP000000598">
    <property type="component" value="Chromosome C"/>
</dbReference>
<dbReference type="GO" id="GO:0005739">
    <property type="term" value="C:mitochondrion"/>
    <property type="evidence" value="ECO:0007669"/>
    <property type="project" value="UniProtKB-SubCell"/>
</dbReference>
<dbReference type="InterPro" id="IPR011009">
    <property type="entry name" value="Kinase-like_dom_sf"/>
</dbReference>
<dbReference type="InterPro" id="IPR051035">
    <property type="entry name" value="Mito_inheritance_9"/>
</dbReference>
<dbReference type="PANTHER" id="PTHR36091">
    <property type="entry name" value="ALTERED INHERITANCE OF MITOCHONDRIA PROTEIN 9, MITOCHONDRIAL"/>
    <property type="match status" value="1"/>
</dbReference>
<dbReference type="PANTHER" id="PTHR36091:SF1">
    <property type="entry name" value="ALTERED INHERITANCE OF MITOCHONDRIA PROTEIN 9, MITOCHONDRIAL"/>
    <property type="match status" value="1"/>
</dbReference>
<dbReference type="SUPFAM" id="SSF56112">
    <property type="entry name" value="Protein kinase-like (PK-like)"/>
    <property type="match status" value="1"/>
</dbReference>
<gene>
    <name type="primary">AIM9</name>
    <name type="synonym">FMP29</name>
    <name type="ordered locus">KLLA0C07579g</name>
</gene>
<feature type="transit peptide" description="Mitochondrion" evidence="2">
    <location>
        <begin position="1"/>
        <end position="31"/>
    </location>
</feature>
<feature type="chain" id="PRO_0000408723" description="Altered inheritance of mitochondria protein 9, mitochondrial">
    <location>
        <begin position="32"/>
        <end position="619"/>
    </location>
</feature>
<keyword id="KW-0496">Mitochondrion</keyword>
<keyword id="KW-1185">Reference proteome</keyword>
<keyword id="KW-0809">Transit peptide</keyword>
<proteinExistence type="inferred from homology"/>
<name>AIM9_KLULA</name>
<protein>
    <recommendedName>
        <fullName>Altered inheritance of mitochondria protein 9, mitochondrial</fullName>
    </recommendedName>
    <alternativeName>
        <fullName>Found in mitochondrial proteome protein 29</fullName>
    </alternativeName>
</protein>